<proteinExistence type="inferred from homology"/>
<feature type="chain" id="PRO_0000242804" description="Thymidine kinase">
    <location>
        <begin position="1"/>
        <end position="205"/>
    </location>
</feature>
<feature type="active site" description="Proton acceptor" evidence="1">
    <location>
        <position position="88"/>
    </location>
</feature>
<feature type="binding site" evidence="1">
    <location>
        <begin position="9"/>
        <end position="16"/>
    </location>
    <ligand>
        <name>ATP</name>
        <dbReference type="ChEBI" id="CHEBI:30616"/>
    </ligand>
</feature>
<feature type="binding site" evidence="1">
    <location>
        <begin position="87"/>
        <end position="90"/>
    </location>
    <ligand>
        <name>ATP</name>
        <dbReference type="ChEBI" id="CHEBI:30616"/>
    </ligand>
</feature>
<feature type="binding site" evidence="1">
    <location>
        <position position="145"/>
    </location>
    <ligand>
        <name>Zn(2+)</name>
        <dbReference type="ChEBI" id="CHEBI:29105"/>
    </ligand>
</feature>
<feature type="binding site" evidence="1">
    <location>
        <position position="147"/>
    </location>
    <ligand>
        <name>Zn(2+)</name>
        <dbReference type="ChEBI" id="CHEBI:29105"/>
    </ligand>
</feature>
<feature type="binding site" evidence="1">
    <location>
        <position position="182"/>
    </location>
    <ligand>
        <name>Zn(2+)</name>
        <dbReference type="ChEBI" id="CHEBI:29105"/>
    </ligand>
</feature>
<feature type="binding site" evidence="1">
    <location>
        <position position="185"/>
    </location>
    <ligand>
        <name>Zn(2+)</name>
        <dbReference type="ChEBI" id="CHEBI:29105"/>
    </ligand>
</feature>
<dbReference type="EC" id="2.7.1.21" evidence="1"/>
<dbReference type="EMBL" id="CP000034">
    <property type="protein sequence ID" value="ABB61437.1"/>
    <property type="molecule type" value="Genomic_DNA"/>
</dbReference>
<dbReference type="RefSeq" id="WP_000068066.1">
    <property type="nucleotide sequence ID" value="NC_007606.1"/>
</dbReference>
<dbReference type="RefSeq" id="YP_402928.1">
    <property type="nucleotide sequence ID" value="NC_007606.1"/>
</dbReference>
<dbReference type="SMR" id="Q32GW8"/>
<dbReference type="STRING" id="300267.SDY_1290"/>
<dbReference type="EnsemblBacteria" id="ABB61437">
    <property type="protein sequence ID" value="ABB61437"/>
    <property type="gene ID" value="SDY_1290"/>
</dbReference>
<dbReference type="KEGG" id="sdy:SDY_1290"/>
<dbReference type="PATRIC" id="fig|300267.13.peg.1529"/>
<dbReference type="HOGENOM" id="CLU_064400_2_1_6"/>
<dbReference type="Proteomes" id="UP000002716">
    <property type="component" value="Chromosome"/>
</dbReference>
<dbReference type="GO" id="GO:0005829">
    <property type="term" value="C:cytosol"/>
    <property type="evidence" value="ECO:0007669"/>
    <property type="project" value="TreeGrafter"/>
</dbReference>
<dbReference type="GO" id="GO:0005524">
    <property type="term" value="F:ATP binding"/>
    <property type="evidence" value="ECO:0007669"/>
    <property type="project" value="UniProtKB-UniRule"/>
</dbReference>
<dbReference type="GO" id="GO:0004797">
    <property type="term" value="F:thymidine kinase activity"/>
    <property type="evidence" value="ECO:0007669"/>
    <property type="project" value="UniProtKB-UniRule"/>
</dbReference>
<dbReference type="GO" id="GO:0008270">
    <property type="term" value="F:zinc ion binding"/>
    <property type="evidence" value="ECO:0007669"/>
    <property type="project" value="UniProtKB-UniRule"/>
</dbReference>
<dbReference type="GO" id="GO:0071897">
    <property type="term" value="P:DNA biosynthetic process"/>
    <property type="evidence" value="ECO:0007669"/>
    <property type="project" value="UniProtKB-KW"/>
</dbReference>
<dbReference type="GO" id="GO:0046104">
    <property type="term" value="P:thymidine metabolic process"/>
    <property type="evidence" value="ECO:0007669"/>
    <property type="project" value="TreeGrafter"/>
</dbReference>
<dbReference type="FunFam" id="3.30.60.20:FF:000017">
    <property type="entry name" value="Thymidine kinase"/>
    <property type="match status" value="1"/>
</dbReference>
<dbReference type="FunFam" id="3.40.50.300:FF:000323">
    <property type="entry name" value="Thymidine kinase"/>
    <property type="match status" value="1"/>
</dbReference>
<dbReference type="Gene3D" id="3.30.60.20">
    <property type="match status" value="1"/>
</dbReference>
<dbReference type="Gene3D" id="3.40.50.300">
    <property type="entry name" value="P-loop containing nucleotide triphosphate hydrolases"/>
    <property type="match status" value="1"/>
</dbReference>
<dbReference type="HAMAP" id="MF_00124">
    <property type="entry name" value="Thymidine_kinase"/>
    <property type="match status" value="1"/>
</dbReference>
<dbReference type="InterPro" id="IPR027417">
    <property type="entry name" value="P-loop_NTPase"/>
</dbReference>
<dbReference type="InterPro" id="IPR001267">
    <property type="entry name" value="Thymidine_kinase"/>
</dbReference>
<dbReference type="InterPro" id="IPR020633">
    <property type="entry name" value="Thymidine_kinase_CS"/>
</dbReference>
<dbReference type="NCBIfam" id="NF003298">
    <property type="entry name" value="PRK04296.1-3"/>
    <property type="match status" value="1"/>
</dbReference>
<dbReference type="NCBIfam" id="NF003300">
    <property type="entry name" value="PRK04296.1-5"/>
    <property type="match status" value="1"/>
</dbReference>
<dbReference type="PANTHER" id="PTHR11441">
    <property type="entry name" value="THYMIDINE KINASE"/>
    <property type="match status" value="1"/>
</dbReference>
<dbReference type="PANTHER" id="PTHR11441:SF0">
    <property type="entry name" value="THYMIDINE KINASE, CYTOSOLIC"/>
    <property type="match status" value="1"/>
</dbReference>
<dbReference type="Pfam" id="PF00265">
    <property type="entry name" value="TK"/>
    <property type="match status" value="1"/>
</dbReference>
<dbReference type="PIRSF" id="PIRSF035805">
    <property type="entry name" value="TK_cell"/>
    <property type="match status" value="1"/>
</dbReference>
<dbReference type="SUPFAM" id="SSF57716">
    <property type="entry name" value="Glucocorticoid receptor-like (DNA-binding domain)"/>
    <property type="match status" value="1"/>
</dbReference>
<dbReference type="SUPFAM" id="SSF52540">
    <property type="entry name" value="P-loop containing nucleoside triphosphate hydrolases"/>
    <property type="match status" value="1"/>
</dbReference>
<dbReference type="PROSITE" id="PS00603">
    <property type="entry name" value="TK_CELLULAR_TYPE"/>
    <property type="match status" value="1"/>
</dbReference>
<evidence type="ECO:0000255" key="1">
    <source>
        <dbReference type="HAMAP-Rule" id="MF_00124"/>
    </source>
</evidence>
<sequence length="205" mass="23356">MAQLYFYYSAMNAGKSTALLQSSYNYQERGMRTVVYTAEIDDRFGAGKVSSRIGLSSPAKLFNQNSSLFAEIRAEHEQQAIHCVLVDECQFLTRQQVYELSEVVDQLDIPVLCYGLRTDFRGELFIGSQYLLAWSDKLVELKTICFCGRKASMVLRLDQAGRPYNEGEQVVIGGNERYVSVCRKHYKEALEVGSLTAIQERHRHD</sequence>
<name>KITH_SHIDS</name>
<protein>
    <recommendedName>
        <fullName evidence="1">Thymidine kinase</fullName>
        <ecNumber evidence="1">2.7.1.21</ecNumber>
    </recommendedName>
</protein>
<organism>
    <name type="scientific">Shigella dysenteriae serotype 1 (strain Sd197)</name>
    <dbReference type="NCBI Taxonomy" id="300267"/>
    <lineage>
        <taxon>Bacteria</taxon>
        <taxon>Pseudomonadati</taxon>
        <taxon>Pseudomonadota</taxon>
        <taxon>Gammaproteobacteria</taxon>
        <taxon>Enterobacterales</taxon>
        <taxon>Enterobacteriaceae</taxon>
        <taxon>Shigella</taxon>
    </lineage>
</organism>
<comment type="catalytic activity">
    <reaction evidence="1">
        <text>thymidine + ATP = dTMP + ADP + H(+)</text>
        <dbReference type="Rhea" id="RHEA:19129"/>
        <dbReference type="ChEBI" id="CHEBI:15378"/>
        <dbReference type="ChEBI" id="CHEBI:17748"/>
        <dbReference type="ChEBI" id="CHEBI:30616"/>
        <dbReference type="ChEBI" id="CHEBI:63528"/>
        <dbReference type="ChEBI" id="CHEBI:456216"/>
        <dbReference type="EC" id="2.7.1.21"/>
    </reaction>
</comment>
<comment type="subunit">
    <text evidence="1">Homotetramer.</text>
</comment>
<comment type="subcellular location">
    <subcellularLocation>
        <location evidence="1">Cytoplasm</location>
    </subcellularLocation>
</comment>
<comment type="similarity">
    <text evidence="1">Belongs to the thymidine kinase family.</text>
</comment>
<reference key="1">
    <citation type="journal article" date="2005" name="Nucleic Acids Res.">
        <title>Genome dynamics and diversity of Shigella species, the etiologic agents of bacillary dysentery.</title>
        <authorList>
            <person name="Yang F."/>
            <person name="Yang J."/>
            <person name="Zhang X."/>
            <person name="Chen L."/>
            <person name="Jiang Y."/>
            <person name="Yan Y."/>
            <person name="Tang X."/>
            <person name="Wang J."/>
            <person name="Xiong Z."/>
            <person name="Dong J."/>
            <person name="Xue Y."/>
            <person name="Zhu Y."/>
            <person name="Xu X."/>
            <person name="Sun L."/>
            <person name="Chen S."/>
            <person name="Nie H."/>
            <person name="Peng J."/>
            <person name="Xu J."/>
            <person name="Wang Y."/>
            <person name="Yuan Z."/>
            <person name="Wen Y."/>
            <person name="Yao Z."/>
            <person name="Shen Y."/>
            <person name="Qiang B."/>
            <person name="Hou Y."/>
            <person name="Yu J."/>
            <person name="Jin Q."/>
        </authorList>
    </citation>
    <scope>NUCLEOTIDE SEQUENCE [LARGE SCALE GENOMIC DNA]</scope>
    <source>
        <strain>Sd197</strain>
    </source>
</reference>
<keyword id="KW-0067">ATP-binding</keyword>
<keyword id="KW-0963">Cytoplasm</keyword>
<keyword id="KW-0237">DNA synthesis</keyword>
<keyword id="KW-0418">Kinase</keyword>
<keyword id="KW-0479">Metal-binding</keyword>
<keyword id="KW-0547">Nucleotide-binding</keyword>
<keyword id="KW-1185">Reference proteome</keyword>
<keyword id="KW-0808">Transferase</keyword>
<keyword id="KW-0862">Zinc</keyword>
<accession>Q32GW8</accession>
<gene>
    <name evidence="1" type="primary">tdk</name>
    <name type="ordered locus">SDY_1290</name>
</gene>